<dbReference type="EMBL" id="S67954">
    <property type="protein sequence ID" value="AAD14005.1"/>
    <property type="molecule type" value="mRNA"/>
</dbReference>
<dbReference type="EMBL" id="S67956">
    <property type="protein sequence ID" value="AAB29750.1"/>
    <property type="molecule type" value="Genomic_DNA"/>
</dbReference>
<dbReference type="EMBL" id="AF399641">
    <property type="protein sequence ID" value="AAK94451.1"/>
    <property type="status" value="ALT_INIT"/>
    <property type="molecule type" value="mRNA"/>
</dbReference>
<dbReference type="EMBL" id="BC142112">
    <property type="protein sequence ID" value="AAI42113.1"/>
    <property type="molecule type" value="mRNA"/>
</dbReference>
<dbReference type="RefSeq" id="NP_776432.1">
    <property type="nucleotide sequence ID" value="NM_174007.1"/>
</dbReference>
<dbReference type="SMR" id="Q09141"/>
<dbReference type="FunCoup" id="Q09141">
    <property type="interactions" value="53"/>
</dbReference>
<dbReference type="STRING" id="9913.ENSBTAP00000018757"/>
<dbReference type="PaxDb" id="9913-ENSBTAP00000018757"/>
<dbReference type="GeneID" id="281044"/>
<dbReference type="KEGG" id="bta:281044"/>
<dbReference type="CTD" id="6355"/>
<dbReference type="VEuPathDB" id="HostDB:ENSBTAG00000014113"/>
<dbReference type="eggNOG" id="ENOG502S8M4">
    <property type="taxonomic scope" value="Eukaryota"/>
</dbReference>
<dbReference type="HOGENOM" id="CLU_141716_1_0_1"/>
<dbReference type="InParanoid" id="Q09141"/>
<dbReference type="OMA" id="SIPVTCC"/>
<dbReference type="OrthoDB" id="9930747at2759"/>
<dbReference type="TreeFam" id="TF334888"/>
<dbReference type="Proteomes" id="UP000009136">
    <property type="component" value="Chromosome 19"/>
</dbReference>
<dbReference type="Bgee" id="ENSBTAG00000014113">
    <property type="expression patterns" value="Expressed in intramuscular adipose tissue and 94 other cell types or tissues"/>
</dbReference>
<dbReference type="GO" id="GO:0005615">
    <property type="term" value="C:extracellular space"/>
    <property type="evidence" value="ECO:0000318"/>
    <property type="project" value="GO_Central"/>
</dbReference>
<dbReference type="GO" id="GO:0048020">
    <property type="term" value="F:CCR chemokine receptor binding"/>
    <property type="evidence" value="ECO:0000318"/>
    <property type="project" value="GO_Central"/>
</dbReference>
<dbReference type="GO" id="GO:0008009">
    <property type="term" value="F:chemokine activity"/>
    <property type="evidence" value="ECO:0000318"/>
    <property type="project" value="GO_Central"/>
</dbReference>
<dbReference type="GO" id="GO:0008201">
    <property type="term" value="F:heparin binding"/>
    <property type="evidence" value="ECO:0007669"/>
    <property type="project" value="UniProtKB-KW"/>
</dbReference>
<dbReference type="GO" id="GO:0016004">
    <property type="term" value="F:phospholipase activator activity"/>
    <property type="evidence" value="ECO:0007669"/>
    <property type="project" value="Ensembl"/>
</dbReference>
<dbReference type="GO" id="GO:0004672">
    <property type="term" value="F:protein kinase activity"/>
    <property type="evidence" value="ECO:0007669"/>
    <property type="project" value="Ensembl"/>
</dbReference>
<dbReference type="GO" id="GO:0061844">
    <property type="term" value="P:antimicrobial humoral immune response mediated by antimicrobial peptide"/>
    <property type="evidence" value="ECO:0000318"/>
    <property type="project" value="GO_Central"/>
</dbReference>
<dbReference type="GO" id="GO:0006816">
    <property type="term" value="P:calcium ion transport"/>
    <property type="evidence" value="ECO:0007669"/>
    <property type="project" value="Ensembl"/>
</dbReference>
<dbReference type="GO" id="GO:0007267">
    <property type="term" value="P:cell-cell signaling"/>
    <property type="evidence" value="ECO:0007669"/>
    <property type="project" value="Ensembl"/>
</dbReference>
<dbReference type="GO" id="GO:0070098">
    <property type="term" value="P:chemokine-mediated signaling pathway"/>
    <property type="evidence" value="ECO:0000318"/>
    <property type="project" value="GO_Central"/>
</dbReference>
<dbReference type="GO" id="GO:0048245">
    <property type="term" value="P:eosinophil chemotaxis"/>
    <property type="evidence" value="ECO:0000318"/>
    <property type="project" value="GO_Central"/>
</dbReference>
<dbReference type="GO" id="GO:0006887">
    <property type="term" value="P:exocytosis"/>
    <property type="evidence" value="ECO:0007669"/>
    <property type="project" value="Ensembl"/>
</dbReference>
<dbReference type="GO" id="GO:0006954">
    <property type="term" value="P:inflammatory response"/>
    <property type="evidence" value="ECO:0000318"/>
    <property type="project" value="GO_Central"/>
</dbReference>
<dbReference type="GO" id="GO:0006874">
    <property type="term" value="P:intracellular calcium ion homeostasis"/>
    <property type="evidence" value="ECO:0007669"/>
    <property type="project" value="Ensembl"/>
</dbReference>
<dbReference type="GO" id="GO:0044828">
    <property type="term" value="P:negative regulation by host of viral genome replication"/>
    <property type="evidence" value="ECO:0007669"/>
    <property type="project" value="Ensembl"/>
</dbReference>
<dbReference type="GO" id="GO:0030335">
    <property type="term" value="P:positive regulation of cell migration"/>
    <property type="evidence" value="ECO:0000318"/>
    <property type="project" value="GO_Central"/>
</dbReference>
<dbReference type="CDD" id="cd00272">
    <property type="entry name" value="Chemokine_CC"/>
    <property type="match status" value="1"/>
</dbReference>
<dbReference type="FunFam" id="2.40.50.40:FF:000002">
    <property type="entry name" value="C-C motif chemokine"/>
    <property type="match status" value="1"/>
</dbReference>
<dbReference type="Gene3D" id="2.40.50.40">
    <property type="match status" value="1"/>
</dbReference>
<dbReference type="InterPro" id="IPR039809">
    <property type="entry name" value="Chemokine_b/g/d"/>
</dbReference>
<dbReference type="InterPro" id="IPR000827">
    <property type="entry name" value="Chemokine_CC_CS"/>
</dbReference>
<dbReference type="InterPro" id="IPR001811">
    <property type="entry name" value="Chemokine_IL8-like_dom"/>
</dbReference>
<dbReference type="InterPro" id="IPR036048">
    <property type="entry name" value="Interleukin_8-like_sf"/>
</dbReference>
<dbReference type="PANTHER" id="PTHR12015:SF209">
    <property type="entry name" value="C-C MOTIF CHEMOKINE 8"/>
    <property type="match status" value="1"/>
</dbReference>
<dbReference type="PANTHER" id="PTHR12015">
    <property type="entry name" value="SMALL INDUCIBLE CYTOKINE A"/>
    <property type="match status" value="1"/>
</dbReference>
<dbReference type="Pfam" id="PF00048">
    <property type="entry name" value="IL8"/>
    <property type="match status" value="1"/>
</dbReference>
<dbReference type="SMART" id="SM00199">
    <property type="entry name" value="SCY"/>
    <property type="match status" value="1"/>
</dbReference>
<dbReference type="SUPFAM" id="SSF54117">
    <property type="entry name" value="Interleukin 8-like chemokines"/>
    <property type="match status" value="1"/>
</dbReference>
<dbReference type="PROSITE" id="PS00472">
    <property type="entry name" value="SMALL_CYTOKINES_CC"/>
    <property type="match status" value="1"/>
</dbReference>
<gene>
    <name type="primary">CCL8</name>
    <name type="synonym">MCP2</name>
    <name type="synonym">SCYA8</name>
</gene>
<reference key="1">
    <citation type="journal article" date="1994" name="DNA Cell Biol.">
        <title>Cloning of the gene for bovine monocyte chemoattractant protein-2.</title>
        <authorList>
            <person name="Wempe F."/>
            <person name="Hanes J."/>
            <person name="Scheit K.H."/>
        </authorList>
    </citation>
    <scope>NUCLEOTIDE SEQUENCE [GENOMIC DNA / MRNA]</scope>
</reference>
<reference key="2">
    <citation type="submission" date="2001-07" db="EMBL/GenBank/DDBJ databases">
        <title>Role of chemokines in respiratory syncytial virus infection.</title>
        <authorList>
            <person name="Werling D."/>
        </authorList>
    </citation>
    <scope>NUCLEOTIDE SEQUENCE [MRNA]</scope>
</reference>
<reference key="3">
    <citation type="submission" date="2007-06" db="EMBL/GenBank/DDBJ databases">
        <authorList>
            <consortium name="NIH - Mammalian Gene Collection (MGC) project"/>
        </authorList>
    </citation>
    <scope>NUCLEOTIDE SEQUENCE [LARGE SCALE MRNA]</scope>
    <source>
        <strain>Hereford</strain>
        <tissue>Thymus</tissue>
    </source>
</reference>
<proteinExistence type="inferred from homology"/>
<keyword id="KW-0145">Chemotaxis</keyword>
<keyword id="KW-0202">Cytokine</keyword>
<keyword id="KW-1015">Disulfide bond</keyword>
<keyword id="KW-0358">Heparin-binding</keyword>
<keyword id="KW-0395">Inflammatory response</keyword>
<keyword id="KW-0873">Pyrrolidone carboxylic acid</keyword>
<keyword id="KW-1185">Reference proteome</keyword>
<keyword id="KW-0964">Secreted</keyword>
<keyword id="KW-0732">Signal</keyword>
<organism>
    <name type="scientific">Bos taurus</name>
    <name type="common">Bovine</name>
    <dbReference type="NCBI Taxonomy" id="9913"/>
    <lineage>
        <taxon>Eukaryota</taxon>
        <taxon>Metazoa</taxon>
        <taxon>Chordata</taxon>
        <taxon>Craniata</taxon>
        <taxon>Vertebrata</taxon>
        <taxon>Euteleostomi</taxon>
        <taxon>Mammalia</taxon>
        <taxon>Eutheria</taxon>
        <taxon>Laurasiatheria</taxon>
        <taxon>Artiodactyla</taxon>
        <taxon>Ruminantia</taxon>
        <taxon>Pecora</taxon>
        <taxon>Bovidae</taxon>
        <taxon>Bovinae</taxon>
        <taxon>Bos</taxon>
    </lineage>
</organism>
<name>CCL8_BOVIN</name>
<accession>Q09141</accession>
<accession>A5PJH3</accession>
<accession>Q95MD5</accession>
<comment type="function">
    <text>Chemotactic factor that attracts monocytes. This protein can bind heparin.</text>
</comment>
<comment type="subunit">
    <text evidence="1">Monomer or homodimer; in equilibrium.</text>
</comment>
<comment type="subcellular location">
    <subcellularLocation>
        <location evidence="1">Secreted</location>
    </subcellularLocation>
</comment>
<comment type="similarity">
    <text evidence="3">Belongs to the intercrine beta (chemokine CC) family.</text>
</comment>
<comment type="sequence caution" evidence="3">
    <conflict type="erroneous initiation">
        <sequence resource="EMBL-CDS" id="AAK94451"/>
    </conflict>
</comment>
<protein>
    <recommendedName>
        <fullName>C-C motif chemokine 8</fullName>
    </recommendedName>
    <alternativeName>
        <fullName>Monocyte chemoattractant protein 2</fullName>
    </alternativeName>
    <alternativeName>
        <fullName>Monocyte chemotactic protein 2</fullName>
        <shortName>MCP-2</shortName>
    </alternativeName>
    <alternativeName>
        <fullName>Small-inducible cytokine A8</fullName>
    </alternativeName>
</protein>
<sequence>MKVSAGILCLLLVAATFGTQVLAQPDSVSTPITCCFSVINGKIPFKKLDSYTRITNSQCPQEAVIFKTKADRDVCADPKQKWVQTSIRLLDQKSRTPKP</sequence>
<feature type="signal peptide" evidence="2">
    <location>
        <begin position="1"/>
        <end position="23"/>
    </location>
</feature>
<feature type="chain" id="PRO_0000005186" description="C-C motif chemokine 8">
    <location>
        <begin position="24"/>
        <end position="99"/>
    </location>
</feature>
<feature type="modified residue" description="Pyrrolidone carboxylic acid" evidence="2">
    <location>
        <position position="24"/>
    </location>
</feature>
<feature type="disulfide bond" evidence="1">
    <location>
        <begin position="34"/>
        <end position="59"/>
    </location>
</feature>
<feature type="disulfide bond" evidence="1">
    <location>
        <begin position="35"/>
        <end position="75"/>
    </location>
</feature>
<evidence type="ECO:0000250" key="1"/>
<evidence type="ECO:0000250" key="2">
    <source>
        <dbReference type="UniProtKB" id="P80075"/>
    </source>
</evidence>
<evidence type="ECO:0000305" key="3"/>